<comment type="subunit">
    <text evidence="2">Part of giant hemoglobin C1, V1 and V2. This worm has three different extracellular Hbs: two dissolved in the vascular blood, V1 (CA. 3,500 kDa) and V2 (CA. 400 kDa), and one in the coelomic fluid, C1 (CA. 400 kDa). V1 consists of four heme-containing, globin chains (B-E) and four linker chains (L1-L4). V2 consists of six globin chains (A-F) and C1 consists of five globin chains (A-E).</text>
</comment>
<comment type="subcellular location">
    <subcellularLocation>
        <location>Secreted</location>
        <location>Extracellular space</location>
    </subcellularLocation>
</comment>
<comment type="similarity">
    <text evidence="1">Belongs to the globin family.</text>
</comment>
<dbReference type="PDB" id="1YHU">
    <property type="method" value="X-ray"/>
    <property type="resolution" value="3.15 A"/>
    <property type="chains" value="B/F/J/N/R/V=1-144"/>
</dbReference>
<dbReference type="PDBsum" id="1YHU"/>
<dbReference type="SMR" id="P80592"/>
<dbReference type="EvolutionaryTrace" id="P80592"/>
<dbReference type="GO" id="GO:0005576">
    <property type="term" value="C:extracellular region"/>
    <property type="evidence" value="ECO:0007669"/>
    <property type="project" value="UniProtKB-SubCell"/>
</dbReference>
<dbReference type="GO" id="GO:0005833">
    <property type="term" value="C:hemoglobin complex"/>
    <property type="evidence" value="ECO:0007669"/>
    <property type="project" value="InterPro"/>
</dbReference>
<dbReference type="GO" id="GO:0020037">
    <property type="term" value="F:heme binding"/>
    <property type="evidence" value="ECO:0007669"/>
    <property type="project" value="InterPro"/>
</dbReference>
<dbReference type="GO" id="GO:0005506">
    <property type="term" value="F:iron ion binding"/>
    <property type="evidence" value="ECO:0007669"/>
    <property type="project" value="InterPro"/>
</dbReference>
<dbReference type="GO" id="GO:0019825">
    <property type="term" value="F:oxygen binding"/>
    <property type="evidence" value="ECO:0007669"/>
    <property type="project" value="InterPro"/>
</dbReference>
<dbReference type="GO" id="GO:0005344">
    <property type="term" value="F:oxygen carrier activity"/>
    <property type="evidence" value="ECO:0007669"/>
    <property type="project" value="UniProtKB-KW"/>
</dbReference>
<dbReference type="CDD" id="cd01040">
    <property type="entry name" value="Mb-like"/>
    <property type="match status" value="1"/>
</dbReference>
<dbReference type="Gene3D" id="1.10.490.10">
    <property type="entry name" value="Globins"/>
    <property type="match status" value="1"/>
</dbReference>
<dbReference type="InterPro" id="IPR000971">
    <property type="entry name" value="Globin"/>
</dbReference>
<dbReference type="InterPro" id="IPR050532">
    <property type="entry name" value="Globin-like_OT"/>
</dbReference>
<dbReference type="InterPro" id="IPR009050">
    <property type="entry name" value="Globin-like_sf"/>
</dbReference>
<dbReference type="InterPro" id="IPR012292">
    <property type="entry name" value="Globin/Proto"/>
</dbReference>
<dbReference type="InterPro" id="IPR014610">
    <property type="entry name" value="Haemoglobin_extracell"/>
</dbReference>
<dbReference type="InterPro" id="IPR044399">
    <property type="entry name" value="Mb-like_M"/>
</dbReference>
<dbReference type="PANTHER" id="PTHR46458">
    <property type="entry name" value="BLR2807 PROTEIN"/>
    <property type="match status" value="1"/>
</dbReference>
<dbReference type="PANTHER" id="PTHR46458:SF1">
    <property type="entry name" value="GEO09476P1"/>
    <property type="match status" value="1"/>
</dbReference>
<dbReference type="Pfam" id="PF00042">
    <property type="entry name" value="Globin"/>
    <property type="match status" value="1"/>
</dbReference>
<dbReference type="PIRSF" id="PIRSF036517">
    <property type="entry name" value="Ext_hemo"/>
    <property type="match status" value="1"/>
</dbReference>
<dbReference type="SUPFAM" id="SSF46458">
    <property type="entry name" value="Globin-like"/>
    <property type="match status" value="1"/>
</dbReference>
<dbReference type="PROSITE" id="PS01033">
    <property type="entry name" value="GLOBIN"/>
    <property type="match status" value="1"/>
</dbReference>
<name>GLBB_RIFPA</name>
<accession>P80592</accession>
<keyword id="KW-0002">3D-structure</keyword>
<keyword id="KW-0903">Direct protein sequencing</keyword>
<keyword id="KW-0349">Heme</keyword>
<keyword id="KW-0408">Iron</keyword>
<keyword id="KW-0479">Metal-binding</keyword>
<keyword id="KW-0561">Oxygen transport</keyword>
<keyword id="KW-0964">Secreted</keyword>
<keyword id="KW-0813">Transport</keyword>
<sequence length="144" mass="16135">DYVCGPLQRLKVKRQWAEAYGSGNSREEFGHFIWSHVFQHSPAARDMFKRVRGDNIHTPAFRAHATRVLGGLDMCIALLDDEPVLNTQLAHLAKQHETRGVEAAHYDTVNHAVMMGVENVIGSEVFDQDAWKPCLNVITNGIQG</sequence>
<organism>
    <name type="scientific">Riftia pachyptila</name>
    <name type="common">Vent tube worm</name>
    <dbReference type="NCBI Taxonomy" id="6426"/>
    <lineage>
        <taxon>Eukaryota</taxon>
        <taxon>Metazoa</taxon>
        <taxon>Spiralia</taxon>
        <taxon>Lophotrochozoa</taxon>
        <taxon>Annelida</taxon>
        <taxon>Polychaeta</taxon>
        <taxon>Sedentaria</taxon>
        <taxon>Canalipalpata</taxon>
        <taxon>Sabellida</taxon>
        <taxon>Siboglinidae</taxon>
        <taxon>Riftia</taxon>
    </lineage>
</organism>
<reference key="1">
    <citation type="journal article" date="1997" name="Proteins">
        <title>Primary structure of the common polypeptide chain b from the multi-hemoglobin system of the hydrothermal vent tube worm Riftia pachyptila: an insight on the sulfide binding-site.</title>
        <authorList>
            <person name="Zal F."/>
            <person name="Suzuki T."/>
            <person name="Kawasaki Y."/>
            <person name="Childress J.J."/>
            <person name="Lallier F.H."/>
            <person name="Toulmond A."/>
        </authorList>
    </citation>
    <scope>PROTEIN SEQUENCE</scope>
</reference>
<reference key="2">
    <citation type="journal article" date="2005" name="Proc. Natl. Acad. Sci. U.S.A.">
        <title>Sulfide binding is mediated by zinc ions discovered in the crystal structure of a hydrothermal vent tubeworm hemoglobin.</title>
        <authorList>
            <person name="Flores J.F."/>
            <person name="Fisher C.R."/>
            <person name="Carney S.L."/>
            <person name="Green B.N."/>
            <person name="Freytag J.K."/>
            <person name="Schaeffer S.W."/>
            <person name="Royer W.E. Jr."/>
        </authorList>
    </citation>
    <scope>X-RAY CRYSTALLOGRAPHY (3.15 ANGSTROMS) IN COMPLEX WITH HEME</scope>
</reference>
<proteinExistence type="evidence at protein level"/>
<protein>
    <recommendedName>
        <fullName>Giant hemoglobins B chain</fullName>
    </recommendedName>
</protein>
<evidence type="ECO:0000255" key="1">
    <source>
        <dbReference type="PROSITE-ProRule" id="PRU00238"/>
    </source>
</evidence>
<evidence type="ECO:0000269" key="2">
    <source>
    </source>
</evidence>
<evidence type="ECO:0007829" key="3">
    <source>
        <dbReference type="PDB" id="1YHU"/>
    </source>
</evidence>
<feature type="chain" id="PRO_0000052509" description="Giant hemoglobins B chain">
    <location>
        <begin position="1"/>
        <end position="144"/>
    </location>
</feature>
<feature type="domain" description="Globin" evidence="1">
    <location>
        <begin position="3"/>
        <end position="144"/>
    </location>
</feature>
<feature type="binding site" description="proximal binding residue">
    <location>
        <position position="96"/>
    </location>
    <ligand>
        <name>heme b</name>
        <dbReference type="ChEBI" id="CHEBI:60344"/>
    </ligand>
    <ligandPart>
        <name>Fe</name>
        <dbReference type="ChEBI" id="CHEBI:18248"/>
    </ligandPart>
</feature>
<feature type="helix" evidence="3">
    <location>
        <begin position="6"/>
        <end position="19"/>
    </location>
</feature>
<feature type="strand" evidence="3">
    <location>
        <begin position="22"/>
        <end position="24"/>
    </location>
</feature>
<feature type="helix" evidence="3">
    <location>
        <begin position="26"/>
        <end position="40"/>
    </location>
</feature>
<feature type="helix" evidence="3">
    <location>
        <begin position="42"/>
        <end position="51"/>
    </location>
</feature>
<feature type="turn" evidence="3">
    <location>
        <begin position="52"/>
        <end position="54"/>
    </location>
</feature>
<feature type="strand" evidence="3">
    <location>
        <begin position="56"/>
        <end position="58"/>
    </location>
</feature>
<feature type="helix" evidence="3">
    <location>
        <begin position="59"/>
        <end position="78"/>
    </location>
</feature>
<feature type="helix" evidence="3">
    <location>
        <begin position="82"/>
        <end position="96"/>
    </location>
</feature>
<feature type="strand" evidence="3">
    <location>
        <begin position="97"/>
        <end position="99"/>
    </location>
</feature>
<feature type="helix" evidence="3">
    <location>
        <begin position="103"/>
        <end position="121"/>
    </location>
</feature>
<feature type="strand" evidence="3">
    <location>
        <begin position="123"/>
        <end position="125"/>
    </location>
</feature>
<feature type="helix" evidence="3">
    <location>
        <begin position="128"/>
        <end position="143"/>
    </location>
</feature>